<organism>
    <name type="scientific">Drosophila melanogaster</name>
    <name type="common">Fruit fly</name>
    <dbReference type="NCBI Taxonomy" id="7227"/>
    <lineage>
        <taxon>Eukaryota</taxon>
        <taxon>Metazoa</taxon>
        <taxon>Ecdysozoa</taxon>
        <taxon>Arthropoda</taxon>
        <taxon>Hexapoda</taxon>
        <taxon>Insecta</taxon>
        <taxon>Pterygota</taxon>
        <taxon>Neoptera</taxon>
        <taxon>Endopterygota</taxon>
        <taxon>Diptera</taxon>
        <taxon>Brachycera</taxon>
        <taxon>Muscomorpha</taxon>
        <taxon>Ephydroidea</taxon>
        <taxon>Drosophilidae</taxon>
        <taxon>Drosophila</taxon>
        <taxon>Sophophora</taxon>
    </lineage>
</organism>
<accession>Q9VJQ5</accession>
<accession>Q2XYD4</accession>
<accession>Q9NKA2</accession>
<gene>
    <name type="primary">NC2beta</name>
    <name type="synonym">Dr1</name>
    <name type="ORF">CG4185</name>
</gene>
<proteinExistence type="evidence at protein level"/>
<name>NC2B_DROME</name>
<dbReference type="EMBL" id="AF302257">
    <property type="protein sequence ID" value="AAG15388.1"/>
    <property type="molecule type" value="mRNA"/>
</dbReference>
<dbReference type="EMBL" id="AE014134">
    <property type="protein sequence ID" value="AAF53428.1"/>
    <property type="molecule type" value="Genomic_DNA"/>
</dbReference>
<dbReference type="EMBL" id="AY060717">
    <property type="protein sequence ID" value="AAL28265.2"/>
    <property type="status" value="ALT_SEQ"/>
    <property type="molecule type" value="mRNA"/>
</dbReference>
<dbReference type="EMBL" id="DQ138728">
    <property type="protein sequence ID" value="ABA86334.1"/>
    <property type="molecule type" value="Genomic_DNA"/>
</dbReference>
<dbReference type="RefSeq" id="NP_609736.1">
    <property type="nucleotide sequence ID" value="NM_135892.4"/>
</dbReference>
<dbReference type="SMR" id="Q9VJQ5"/>
<dbReference type="BioGRID" id="60894">
    <property type="interactions" value="25"/>
</dbReference>
<dbReference type="ComplexPortal" id="CPX-2742">
    <property type="entry name" value="ATAC histone acetyltransferase complex"/>
</dbReference>
<dbReference type="FunCoup" id="Q9VJQ5">
    <property type="interactions" value="1521"/>
</dbReference>
<dbReference type="IntAct" id="Q9VJQ5">
    <property type="interactions" value="15"/>
</dbReference>
<dbReference type="STRING" id="7227.FBpp0080256"/>
<dbReference type="PaxDb" id="7227-FBpp0080256"/>
<dbReference type="DNASU" id="34875"/>
<dbReference type="EnsemblMetazoa" id="FBtr0080695">
    <property type="protein sequence ID" value="FBpp0080256"/>
    <property type="gene ID" value="FBgn0028926"/>
</dbReference>
<dbReference type="GeneID" id="34875"/>
<dbReference type="KEGG" id="dme:Dmel_CG4185"/>
<dbReference type="UCSC" id="CG4185-RA">
    <property type="organism name" value="d. melanogaster"/>
</dbReference>
<dbReference type="AGR" id="FB:FBgn0028926"/>
<dbReference type="CTD" id="34875"/>
<dbReference type="FlyBase" id="FBgn0028926">
    <property type="gene designation" value="NC2beta"/>
</dbReference>
<dbReference type="VEuPathDB" id="VectorBase:FBgn0028926"/>
<dbReference type="eggNOG" id="KOG0871">
    <property type="taxonomic scope" value="Eukaryota"/>
</dbReference>
<dbReference type="GeneTree" id="ENSGT00550000075010"/>
<dbReference type="HOGENOM" id="CLU_066247_11_1_1"/>
<dbReference type="InParanoid" id="Q9VJQ5"/>
<dbReference type="OMA" id="EVCNQSN"/>
<dbReference type="OrthoDB" id="601405at2759"/>
<dbReference type="PhylomeDB" id="Q9VJQ5"/>
<dbReference type="SignaLink" id="Q9VJQ5"/>
<dbReference type="BioGRID-ORCS" id="34875">
    <property type="hits" value="0 hits in 1 CRISPR screen"/>
</dbReference>
<dbReference type="GenomeRNAi" id="34875"/>
<dbReference type="PRO" id="PR:Q9VJQ5"/>
<dbReference type="Proteomes" id="UP000000803">
    <property type="component" value="Chromosome 2L"/>
</dbReference>
<dbReference type="Bgee" id="FBgn0028926">
    <property type="expression patterns" value="Expressed in adult anterior midgut class I enteroendocrine cell in adult midgut (Drosophila) and 97 other cell types or tissues"/>
</dbReference>
<dbReference type="GO" id="GO:0140672">
    <property type="term" value="C:ATAC complex"/>
    <property type="evidence" value="ECO:0000314"/>
    <property type="project" value="FlyBase"/>
</dbReference>
<dbReference type="GO" id="GO:0017054">
    <property type="term" value="C:negative cofactor 2 complex"/>
    <property type="evidence" value="ECO:0000318"/>
    <property type="project" value="GO_Central"/>
</dbReference>
<dbReference type="GO" id="GO:0005634">
    <property type="term" value="C:nucleus"/>
    <property type="evidence" value="ECO:0000314"/>
    <property type="project" value="UniProtKB"/>
</dbReference>
<dbReference type="GO" id="GO:0001046">
    <property type="term" value="F:core promoter sequence-specific DNA binding"/>
    <property type="evidence" value="ECO:0000314"/>
    <property type="project" value="FlyBase"/>
</dbReference>
<dbReference type="GO" id="GO:0140297">
    <property type="term" value="F:DNA-binding transcription factor binding"/>
    <property type="evidence" value="ECO:0000353"/>
    <property type="project" value="FlyBase"/>
</dbReference>
<dbReference type="GO" id="GO:0046982">
    <property type="term" value="F:protein heterodimerization activity"/>
    <property type="evidence" value="ECO:0007669"/>
    <property type="project" value="InterPro"/>
</dbReference>
<dbReference type="GO" id="GO:0016251">
    <property type="term" value="F:RNA polymerase II general transcription initiation factor activity"/>
    <property type="evidence" value="ECO:0000318"/>
    <property type="project" value="GO_Central"/>
</dbReference>
<dbReference type="GO" id="GO:0017025">
    <property type="term" value="F:TBP-class protein binding"/>
    <property type="evidence" value="ECO:0000318"/>
    <property type="project" value="GO_Central"/>
</dbReference>
<dbReference type="GO" id="GO:0006338">
    <property type="term" value="P:chromatin remodeling"/>
    <property type="evidence" value="ECO:0000314"/>
    <property type="project" value="FlyBase"/>
</dbReference>
<dbReference type="GO" id="GO:0045892">
    <property type="term" value="P:negative regulation of DNA-templated transcription"/>
    <property type="evidence" value="ECO:0000314"/>
    <property type="project" value="UniProtKB"/>
</dbReference>
<dbReference type="GO" id="GO:0000122">
    <property type="term" value="P:negative regulation of transcription by RNA polymerase II"/>
    <property type="evidence" value="ECO:0000314"/>
    <property type="project" value="UniProtKB"/>
</dbReference>
<dbReference type="GO" id="GO:0045893">
    <property type="term" value="P:positive regulation of DNA-templated transcription"/>
    <property type="evidence" value="ECO:0000314"/>
    <property type="project" value="UniProtKB"/>
</dbReference>
<dbReference type="GO" id="GO:0045944">
    <property type="term" value="P:positive regulation of transcription by RNA polymerase II"/>
    <property type="evidence" value="ECO:0000314"/>
    <property type="project" value="UniProtKB"/>
</dbReference>
<dbReference type="GO" id="GO:0051123">
    <property type="term" value="P:RNA polymerase II preinitiation complex assembly"/>
    <property type="evidence" value="ECO:0000318"/>
    <property type="project" value="GO_Central"/>
</dbReference>
<dbReference type="CDD" id="cd22905">
    <property type="entry name" value="HFD_Dr1"/>
    <property type="match status" value="1"/>
</dbReference>
<dbReference type="FunFam" id="1.10.20.10:FF:000019">
    <property type="entry name" value="Negative cofactor 2 beta"/>
    <property type="match status" value="1"/>
</dbReference>
<dbReference type="Gene3D" id="1.10.20.10">
    <property type="entry name" value="Histone, subunit A"/>
    <property type="match status" value="1"/>
</dbReference>
<dbReference type="InterPro" id="IPR003958">
    <property type="entry name" value="CBFA_NFYB_domain"/>
</dbReference>
<dbReference type="InterPro" id="IPR009072">
    <property type="entry name" value="Histone-fold"/>
</dbReference>
<dbReference type="InterPro" id="IPR042225">
    <property type="entry name" value="Ncb2"/>
</dbReference>
<dbReference type="PANTHER" id="PTHR46138">
    <property type="entry name" value="PROTEIN DR1"/>
    <property type="match status" value="1"/>
</dbReference>
<dbReference type="PANTHER" id="PTHR46138:SF1">
    <property type="entry name" value="PROTEIN DR1"/>
    <property type="match status" value="1"/>
</dbReference>
<dbReference type="Pfam" id="PF00808">
    <property type="entry name" value="CBFD_NFYB_HMF"/>
    <property type="match status" value="1"/>
</dbReference>
<dbReference type="SUPFAM" id="SSF47113">
    <property type="entry name" value="Histone-fold"/>
    <property type="match status" value="1"/>
</dbReference>
<reference key="1">
    <citation type="journal article" date="2000" name="Science">
        <title>A basal transcription factor that activates or represses transcription.</title>
        <authorList>
            <person name="Willy P.J."/>
            <person name="Kobayashi R."/>
            <person name="Kadonaga J.T."/>
        </authorList>
    </citation>
    <scope>NUCLEOTIDE SEQUENCE [MRNA]</scope>
    <scope>PROTEIN SEQUENCE OF 72-84 AND 114-133</scope>
    <scope>FUNCTION</scope>
    <scope>INTERACTION WITH NC2-ALPHA</scope>
    <scope>SUBCELLULAR LOCATION</scope>
    <source>
        <strain>Berkeley</strain>
        <tissue>Head</tissue>
    </source>
</reference>
<reference key="2">
    <citation type="journal article" date="1999" name="Genetics">
        <title>An exploration of the sequence of a 2.9-Mb region of the genome of Drosophila melanogaster: the Adh region.</title>
        <authorList>
            <person name="Ashburner M."/>
            <person name="Misra S."/>
            <person name="Roote J."/>
            <person name="Lewis S.E."/>
            <person name="Blazej R.G."/>
            <person name="Davis T."/>
            <person name="Doyle C."/>
            <person name="Galle R.F."/>
            <person name="George R.A."/>
            <person name="Harris N.L."/>
            <person name="Hartzell G."/>
            <person name="Harvey D.A."/>
            <person name="Hong L."/>
            <person name="Houston K.A."/>
            <person name="Hoskins R.A."/>
            <person name="Johnson G."/>
            <person name="Martin C."/>
            <person name="Moshrefi A.R."/>
            <person name="Palazzolo M."/>
            <person name="Reese M.G."/>
            <person name="Spradling A.C."/>
            <person name="Tsang G."/>
            <person name="Wan K.H."/>
            <person name="Whitelaw K."/>
            <person name="Celniker S.E."/>
            <person name="Rubin G.M."/>
        </authorList>
    </citation>
    <scope>NUCLEOTIDE SEQUENCE [LARGE SCALE GENOMIC DNA]</scope>
    <source>
        <strain>Berkeley</strain>
    </source>
</reference>
<reference key="3">
    <citation type="journal article" date="2000" name="Science">
        <title>The genome sequence of Drosophila melanogaster.</title>
        <authorList>
            <person name="Adams M.D."/>
            <person name="Celniker S.E."/>
            <person name="Holt R.A."/>
            <person name="Evans C.A."/>
            <person name="Gocayne J.D."/>
            <person name="Amanatides P.G."/>
            <person name="Scherer S.E."/>
            <person name="Li P.W."/>
            <person name="Hoskins R.A."/>
            <person name="Galle R.F."/>
            <person name="George R.A."/>
            <person name="Lewis S.E."/>
            <person name="Richards S."/>
            <person name="Ashburner M."/>
            <person name="Henderson S.N."/>
            <person name="Sutton G.G."/>
            <person name="Wortman J.R."/>
            <person name="Yandell M.D."/>
            <person name="Zhang Q."/>
            <person name="Chen L.X."/>
            <person name="Brandon R.C."/>
            <person name="Rogers Y.-H.C."/>
            <person name="Blazej R.G."/>
            <person name="Champe M."/>
            <person name="Pfeiffer B.D."/>
            <person name="Wan K.H."/>
            <person name="Doyle C."/>
            <person name="Baxter E.G."/>
            <person name="Helt G."/>
            <person name="Nelson C.R."/>
            <person name="Miklos G.L.G."/>
            <person name="Abril J.F."/>
            <person name="Agbayani A."/>
            <person name="An H.-J."/>
            <person name="Andrews-Pfannkoch C."/>
            <person name="Baldwin D."/>
            <person name="Ballew R.M."/>
            <person name="Basu A."/>
            <person name="Baxendale J."/>
            <person name="Bayraktaroglu L."/>
            <person name="Beasley E.M."/>
            <person name="Beeson K.Y."/>
            <person name="Benos P.V."/>
            <person name="Berman B.P."/>
            <person name="Bhandari D."/>
            <person name="Bolshakov S."/>
            <person name="Borkova D."/>
            <person name="Botchan M.R."/>
            <person name="Bouck J."/>
            <person name="Brokstein P."/>
            <person name="Brottier P."/>
            <person name="Burtis K.C."/>
            <person name="Busam D.A."/>
            <person name="Butler H."/>
            <person name="Cadieu E."/>
            <person name="Center A."/>
            <person name="Chandra I."/>
            <person name="Cherry J.M."/>
            <person name="Cawley S."/>
            <person name="Dahlke C."/>
            <person name="Davenport L.B."/>
            <person name="Davies P."/>
            <person name="de Pablos B."/>
            <person name="Delcher A."/>
            <person name="Deng Z."/>
            <person name="Mays A.D."/>
            <person name="Dew I."/>
            <person name="Dietz S.M."/>
            <person name="Dodson K."/>
            <person name="Doup L.E."/>
            <person name="Downes M."/>
            <person name="Dugan-Rocha S."/>
            <person name="Dunkov B.C."/>
            <person name="Dunn P."/>
            <person name="Durbin K.J."/>
            <person name="Evangelista C.C."/>
            <person name="Ferraz C."/>
            <person name="Ferriera S."/>
            <person name="Fleischmann W."/>
            <person name="Fosler C."/>
            <person name="Gabrielian A.E."/>
            <person name="Garg N.S."/>
            <person name="Gelbart W.M."/>
            <person name="Glasser K."/>
            <person name="Glodek A."/>
            <person name="Gong F."/>
            <person name="Gorrell J.H."/>
            <person name="Gu Z."/>
            <person name="Guan P."/>
            <person name="Harris M."/>
            <person name="Harris N.L."/>
            <person name="Harvey D.A."/>
            <person name="Heiman T.J."/>
            <person name="Hernandez J.R."/>
            <person name="Houck J."/>
            <person name="Hostin D."/>
            <person name="Houston K.A."/>
            <person name="Howland T.J."/>
            <person name="Wei M.-H."/>
            <person name="Ibegwam C."/>
            <person name="Jalali M."/>
            <person name="Kalush F."/>
            <person name="Karpen G.H."/>
            <person name="Ke Z."/>
            <person name="Kennison J.A."/>
            <person name="Ketchum K.A."/>
            <person name="Kimmel B.E."/>
            <person name="Kodira C.D."/>
            <person name="Kraft C.L."/>
            <person name="Kravitz S."/>
            <person name="Kulp D."/>
            <person name="Lai Z."/>
            <person name="Lasko P."/>
            <person name="Lei Y."/>
            <person name="Levitsky A.A."/>
            <person name="Li J.H."/>
            <person name="Li Z."/>
            <person name="Liang Y."/>
            <person name="Lin X."/>
            <person name="Liu X."/>
            <person name="Mattei B."/>
            <person name="McIntosh T.C."/>
            <person name="McLeod M.P."/>
            <person name="McPherson D."/>
            <person name="Merkulov G."/>
            <person name="Milshina N.V."/>
            <person name="Mobarry C."/>
            <person name="Morris J."/>
            <person name="Moshrefi A."/>
            <person name="Mount S.M."/>
            <person name="Moy M."/>
            <person name="Murphy B."/>
            <person name="Murphy L."/>
            <person name="Muzny D.M."/>
            <person name="Nelson D.L."/>
            <person name="Nelson D.R."/>
            <person name="Nelson K.A."/>
            <person name="Nixon K."/>
            <person name="Nusskern D.R."/>
            <person name="Pacleb J.M."/>
            <person name="Palazzolo M."/>
            <person name="Pittman G.S."/>
            <person name="Pan S."/>
            <person name="Pollard J."/>
            <person name="Puri V."/>
            <person name="Reese M.G."/>
            <person name="Reinert K."/>
            <person name="Remington K."/>
            <person name="Saunders R.D.C."/>
            <person name="Scheeler F."/>
            <person name="Shen H."/>
            <person name="Shue B.C."/>
            <person name="Siden-Kiamos I."/>
            <person name="Simpson M."/>
            <person name="Skupski M.P."/>
            <person name="Smith T.J."/>
            <person name="Spier E."/>
            <person name="Spradling A.C."/>
            <person name="Stapleton M."/>
            <person name="Strong R."/>
            <person name="Sun E."/>
            <person name="Svirskas R."/>
            <person name="Tector C."/>
            <person name="Turner R."/>
            <person name="Venter E."/>
            <person name="Wang A.H."/>
            <person name="Wang X."/>
            <person name="Wang Z.-Y."/>
            <person name="Wassarman D.A."/>
            <person name="Weinstock G.M."/>
            <person name="Weissenbach J."/>
            <person name="Williams S.M."/>
            <person name="Woodage T."/>
            <person name="Worley K.C."/>
            <person name="Wu D."/>
            <person name="Yang S."/>
            <person name="Yao Q.A."/>
            <person name="Ye J."/>
            <person name="Yeh R.-F."/>
            <person name="Zaveri J.S."/>
            <person name="Zhan M."/>
            <person name="Zhang G."/>
            <person name="Zhao Q."/>
            <person name="Zheng L."/>
            <person name="Zheng X.H."/>
            <person name="Zhong F.N."/>
            <person name="Zhong W."/>
            <person name="Zhou X."/>
            <person name="Zhu S.C."/>
            <person name="Zhu X."/>
            <person name="Smith H.O."/>
            <person name="Gibbs R.A."/>
            <person name="Myers E.W."/>
            <person name="Rubin G.M."/>
            <person name="Venter J.C."/>
        </authorList>
    </citation>
    <scope>NUCLEOTIDE SEQUENCE [LARGE SCALE GENOMIC DNA]</scope>
    <source>
        <strain>Berkeley</strain>
    </source>
</reference>
<reference key="4">
    <citation type="journal article" date="2002" name="Genome Biol.">
        <title>Annotation of the Drosophila melanogaster euchromatic genome: a systematic review.</title>
        <authorList>
            <person name="Misra S."/>
            <person name="Crosby M.A."/>
            <person name="Mungall C.J."/>
            <person name="Matthews B.B."/>
            <person name="Campbell K.S."/>
            <person name="Hradecky P."/>
            <person name="Huang Y."/>
            <person name="Kaminker J.S."/>
            <person name="Millburn G.H."/>
            <person name="Prochnik S.E."/>
            <person name="Smith C.D."/>
            <person name="Tupy J.L."/>
            <person name="Whitfield E.J."/>
            <person name="Bayraktaroglu L."/>
            <person name="Berman B.P."/>
            <person name="Bettencourt B.R."/>
            <person name="Celniker S.E."/>
            <person name="de Grey A.D.N.J."/>
            <person name="Drysdale R.A."/>
            <person name="Harris N.L."/>
            <person name="Richter J."/>
            <person name="Russo S."/>
            <person name="Schroeder A.J."/>
            <person name="Shu S.Q."/>
            <person name="Stapleton M."/>
            <person name="Yamada C."/>
            <person name="Ashburner M."/>
            <person name="Gelbart W.M."/>
            <person name="Rubin G.M."/>
            <person name="Lewis S.E."/>
        </authorList>
    </citation>
    <scope>GENOME REANNOTATION</scope>
    <source>
        <strain>Berkeley</strain>
    </source>
</reference>
<reference key="5">
    <citation type="journal article" date="2002" name="Genome Biol.">
        <title>A Drosophila full-length cDNA resource.</title>
        <authorList>
            <person name="Stapleton M."/>
            <person name="Carlson J.W."/>
            <person name="Brokstein P."/>
            <person name="Yu C."/>
            <person name="Champe M."/>
            <person name="George R.A."/>
            <person name="Guarin H."/>
            <person name="Kronmiller B."/>
            <person name="Pacleb J.M."/>
            <person name="Park S."/>
            <person name="Wan K.H."/>
            <person name="Rubin G.M."/>
            <person name="Celniker S.E."/>
        </authorList>
    </citation>
    <scope>NUCLEOTIDE SEQUENCE [LARGE SCALE MRNA]</scope>
    <source>
        <strain>Berkeley</strain>
        <tissue>Head</tissue>
    </source>
</reference>
<reference key="6">
    <citation type="journal article" date="2005" name="Mol. Biol. Evol.">
        <title>Intragenic Hill-Robertson interference influences selection intensity on synonymous mutations in Drosophila.</title>
        <authorList>
            <person name="Comeron J.M."/>
            <person name="Guthrie T.B."/>
        </authorList>
    </citation>
    <scope>NUCLEOTIDE SEQUENCE [GENOMIC DNA] OF 9-177</scope>
    <source>
        <strain>Ral1</strain>
    </source>
</reference>
<reference key="7">
    <citation type="journal article" date="2008" name="Nat. Struct. Mol. Biol.">
        <title>ATAC is a double histone acetyltransferase complex that stimulates nucleosome sliding.</title>
        <authorList>
            <person name="Suganuma T."/>
            <person name="Gutierrez J.L."/>
            <person name="Li B."/>
            <person name="Florens L."/>
            <person name="Swanson S.K."/>
            <person name="Washburn M.P."/>
            <person name="Abmayr S.M."/>
            <person name="Workman J.L."/>
        </authorList>
    </citation>
    <scope>IDENTIFICATION BY MASS SPECTROMETRY</scope>
    <scope>FUNCTION</scope>
    <scope>SUBUNIT</scope>
    <scope>IDENTIFICATION IN THE ATAC COMPLEX</scope>
    <scope>SUBCELLULAR LOCATION</scope>
</reference>
<sequence length="183" mass="20914">MSNPQEELLPPSAEDDELTLPRASINKIIKELVPTVRVANESRELILNCCSEFIHLISSEANEVCNMRNKKTINAEHVLEALERLGFHDYKQEAEAVLHDCKEVAAKRRRQSTRLENLGIPEEELLRQQQELFAKAREEQAREEQQQWMSMQAAAMVQRPPLADGSVASKPSEDDDDDDDDDY</sequence>
<keyword id="KW-0010">Activator</keyword>
<keyword id="KW-0903">Direct protein sequencing</keyword>
<keyword id="KW-0238">DNA-binding</keyword>
<keyword id="KW-0539">Nucleus</keyword>
<keyword id="KW-1185">Reference proteome</keyword>
<keyword id="KW-0678">Repressor</keyword>
<keyword id="KW-0804">Transcription</keyword>
<keyword id="KW-0805">Transcription regulation</keyword>
<comment type="function">
    <text evidence="3 4">Bifunctional basic transcription factor. Activates transcription of DPE (Downstream Promoter Element) containing promoters while repressing transcription of promoters which contain TATA elements (PubMed:11062130). Together with Chrac-14, promotes nucleosome sliding of ATP-dependent nucleosome remodeling complexes (PubMed:18327268).</text>
</comment>
<comment type="subunit">
    <text evidence="3 4">Component of the Ada2a-containing (ATAC) complex composed of at least Ada2a, Atac1, Hcf, Ada3, Gcn5, Mocs2B, Charac-14, Atac3, Atac2, NC2beta and wds (PubMed:18327268). Homodimer (PubMed:18327268). Interacts with NC2-alpha/Drap1 to form the dNC2 complex (PubMed:11062130).</text>
</comment>
<comment type="interaction">
    <interactant intactId="EBI-176193">
        <id>Q9VJQ5</id>
    </interactant>
    <interactant intactId="EBI-22062696">
        <id>Q9GSP1</id>
        <label>NC2alpha</label>
    </interactant>
    <organismsDiffer>false</organismsDiffer>
    <experiments>4</experiments>
</comment>
<comment type="interaction">
    <interactant intactId="EBI-176193">
        <id>Q9VJQ5</id>
    </interactant>
    <interactant intactId="EBI-187533">
        <id>P49906</id>
        <label>Taf11</label>
    </interactant>
    <organismsDiffer>false</organismsDiffer>
    <experiments>3</experiments>
</comment>
<comment type="subcellular location">
    <subcellularLocation>
        <location evidence="3 4">Nucleus</location>
    </subcellularLocation>
</comment>
<comment type="similarity">
    <text evidence="5">Belongs to the NC2 beta/DR1 family.</text>
</comment>
<comment type="sequence caution" evidence="5">
    <conflict type="erroneous translation">
        <sequence resource="EMBL-CDS" id="AAL28265"/>
    </conflict>
    <text>Wrong choice of frame.</text>
</comment>
<evidence type="ECO:0000255" key="1"/>
<evidence type="ECO:0000256" key="2">
    <source>
        <dbReference type="SAM" id="MobiDB-lite"/>
    </source>
</evidence>
<evidence type="ECO:0000269" key="3">
    <source>
    </source>
</evidence>
<evidence type="ECO:0000269" key="4">
    <source>
    </source>
</evidence>
<evidence type="ECO:0000305" key="5"/>
<protein>
    <recommendedName>
        <fullName>Protein Dr1</fullName>
    </recommendedName>
    <alternativeName>
        <fullName>Down-regulator of transcription 1</fullName>
    </alternativeName>
    <alternativeName>
        <fullName>Negative cofactor 2-beta</fullName>
        <shortName>NC2-beta</shortName>
    </alternativeName>
    <alternativeName>
        <fullName>dNC2</fullName>
    </alternativeName>
</protein>
<feature type="chain" id="PRO_0000096752" description="Protein Dr1">
    <location>
        <begin position="1"/>
        <end position="183"/>
    </location>
</feature>
<feature type="domain" description="Histone-fold" evidence="1">
    <location>
        <begin position="19"/>
        <end position="82"/>
    </location>
</feature>
<feature type="region of interest" description="Repression of TATA-containing promoters">
    <location>
        <begin position="92"/>
        <end position="183"/>
    </location>
</feature>
<feature type="region of interest" description="Disordered" evidence="2">
    <location>
        <begin position="155"/>
        <end position="183"/>
    </location>
</feature>
<feature type="compositionally biased region" description="Acidic residues" evidence="2">
    <location>
        <begin position="173"/>
        <end position="183"/>
    </location>
</feature>